<comment type="similarity">
    <text evidence="1">Belongs to the UPF0251 family.</text>
</comment>
<evidence type="ECO:0000305" key="1"/>
<keyword id="KW-1185">Reference proteome</keyword>
<dbReference type="EMBL" id="AE006470">
    <property type="protein sequence ID" value="AAM72185.1"/>
    <property type="molecule type" value="Genomic_DNA"/>
</dbReference>
<dbReference type="RefSeq" id="NP_661843.1">
    <property type="nucleotide sequence ID" value="NC_002932.3"/>
</dbReference>
<dbReference type="RefSeq" id="WP_010932630.1">
    <property type="nucleotide sequence ID" value="NC_002932.3"/>
</dbReference>
<dbReference type="STRING" id="194439.CT0950"/>
<dbReference type="EnsemblBacteria" id="AAM72185">
    <property type="protein sequence ID" value="AAM72185"/>
    <property type="gene ID" value="CT0950"/>
</dbReference>
<dbReference type="KEGG" id="cte:CT0950"/>
<dbReference type="eggNOG" id="COG1342">
    <property type="taxonomic scope" value="Bacteria"/>
</dbReference>
<dbReference type="HOGENOM" id="CLU_094511_0_1_10"/>
<dbReference type="OrthoDB" id="280278at2"/>
<dbReference type="Proteomes" id="UP000001007">
    <property type="component" value="Chromosome"/>
</dbReference>
<dbReference type="HAMAP" id="MF_00674">
    <property type="entry name" value="UPF0251"/>
    <property type="match status" value="1"/>
</dbReference>
<dbReference type="InterPro" id="IPR013324">
    <property type="entry name" value="RNA_pol_sigma_r3/r4-like"/>
</dbReference>
<dbReference type="InterPro" id="IPR002852">
    <property type="entry name" value="UPF0251"/>
</dbReference>
<dbReference type="PANTHER" id="PTHR37478">
    <property type="match status" value="1"/>
</dbReference>
<dbReference type="PANTHER" id="PTHR37478:SF2">
    <property type="entry name" value="UPF0251 PROTEIN TK0562"/>
    <property type="match status" value="1"/>
</dbReference>
<dbReference type="Pfam" id="PF02001">
    <property type="entry name" value="DUF134"/>
    <property type="match status" value="1"/>
</dbReference>
<dbReference type="SUPFAM" id="SSF88659">
    <property type="entry name" value="Sigma3 and sigma4 domains of RNA polymerase sigma factors"/>
    <property type="match status" value="1"/>
</dbReference>
<gene>
    <name type="ordered locus">CT0950</name>
</gene>
<name>Y950_CHLTE</name>
<accession>Q8KDU4</accession>
<feature type="chain" id="PRO_0000147586" description="UPF0251 protein CT0950">
    <location>
        <begin position="1"/>
        <end position="153"/>
    </location>
</feature>
<proteinExistence type="inferred from homology"/>
<protein>
    <recommendedName>
        <fullName>UPF0251 protein CT0950</fullName>
    </recommendedName>
</protein>
<reference key="1">
    <citation type="journal article" date="2002" name="Proc. Natl. Acad. Sci. U.S.A.">
        <title>The complete genome sequence of Chlorobium tepidum TLS, a photosynthetic, anaerobic, green-sulfur bacterium.</title>
        <authorList>
            <person name="Eisen J.A."/>
            <person name="Nelson K.E."/>
            <person name="Paulsen I.T."/>
            <person name="Heidelberg J.F."/>
            <person name="Wu M."/>
            <person name="Dodson R.J."/>
            <person name="DeBoy R.T."/>
            <person name="Gwinn M.L."/>
            <person name="Nelson W.C."/>
            <person name="Haft D.H."/>
            <person name="Hickey E.K."/>
            <person name="Peterson J.D."/>
            <person name="Durkin A.S."/>
            <person name="Kolonay J.F."/>
            <person name="Yang F."/>
            <person name="Holt I.E."/>
            <person name="Umayam L.A."/>
            <person name="Mason T.M."/>
            <person name="Brenner M."/>
            <person name="Shea T.P."/>
            <person name="Parksey D.S."/>
            <person name="Nierman W.C."/>
            <person name="Feldblyum T.V."/>
            <person name="Hansen C.L."/>
            <person name="Craven M.B."/>
            <person name="Radune D."/>
            <person name="Vamathevan J.J."/>
            <person name="Khouri H.M."/>
            <person name="White O."/>
            <person name="Gruber T.M."/>
            <person name="Ketchum K.A."/>
            <person name="Venter J.C."/>
            <person name="Tettelin H."/>
            <person name="Bryant D.A."/>
            <person name="Fraser C.M."/>
        </authorList>
    </citation>
    <scope>NUCLEOTIDE SEQUENCE [LARGE SCALE GENOMIC DNA]</scope>
    <source>
        <strain>ATCC 49652 / DSM 12025 / NBRC 103806 / TLS</strain>
    </source>
</reference>
<organism>
    <name type="scientific">Chlorobaculum tepidum (strain ATCC 49652 / DSM 12025 / NBRC 103806 / TLS)</name>
    <name type="common">Chlorobium tepidum</name>
    <dbReference type="NCBI Taxonomy" id="194439"/>
    <lineage>
        <taxon>Bacteria</taxon>
        <taxon>Pseudomonadati</taxon>
        <taxon>Chlorobiota</taxon>
        <taxon>Chlorobiia</taxon>
        <taxon>Chlorobiales</taxon>
        <taxon>Chlorobiaceae</taxon>
        <taxon>Chlorobaculum</taxon>
    </lineage>
</organism>
<sequence>MKNPRAGRPLHCRSVEELPGVTCFLPEGVPPARLRNVVLSVDEVEALRLADLEGMYHADAADKMKVSRQTFGRIIKSARKKVADALVGGKTICIEGGKITGSCLTGESEEPAVCICLHCGYEQPHVPGVPCRTANCPHCGKMLIRKGRYSRVD</sequence>